<name>ACCA_STRP2</name>
<keyword id="KW-0067">ATP-binding</keyword>
<keyword id="KW-0963">Cytoplasm</keyword>
<keyword id="KW-0275">Fatty acid biosynthesis</keyword>
<keyword id="KW-0276">Fatty acid metabolism</keyword>
<keyword id="KW-0444">Lipid biosynthesis</keyword>
<keyword id="KW-0443">Lipid metabolism</keyword>
<keyword id="KW-0547">Nucleotide-binding</keyword>
<keyword id="KW-1185">Reference proteome</keyword>
<keyword id="KW-0808">Transferase</keyword>
<reference key="1">
    <citation type="journal article" date="2007" name="J. Bacteriol.">
        <title>Genome sequence of Avery's virulent serotype 2 strain D39 of Streptococcus pneumoniae and comparison with that of unencapsulated laboratory strain R6.</title>
        <authorList>
            <person name="Lanie J.A."/>
            <person name="Ng W.-L."/>
            <person name="Kazmierczak K.M."/>
            <person name="Andrzejewski T.M."/>
            <person name="Davidsen T.M."/>
            <person name="Wayne K.J."/>
            <person name="Tettelin H."/>
            <person name="Glass J.I."/>
            <person name="Winkler M.E."/>
        </authorList>
    </citation>
    <scope>NUCLEOTIDE SEQUENCE [LARGE SCALE GENOMIC DNA]</scope>
    <source>
        <strain>D39 / NCTC 7466</strain>
    </source>
</reference>
<accession>Q04M48</accession>
<comment type="function">
    <text evidence="1">Component of the acetyl coenzyme A carboxylase (ACC) complex. First, biotin carboxylase catalyzes the carboxylation of biotin on its carrier protein (BCCP) and then the CO(2) group is transferred by the carboxyltransferase to acetyl-CoA to form malonyl-CoA.</text>
</comment>
<comment type="catalytic activity">
    <reaction evidence="1">
        <text>N(6)-carboxybiotinyl-L-lysyl-[protein] + acetyl-CoA = N(6)-biotinyl-L-lysyl-[protein] + malonyl-CoA</text>
        <dbReference type="Rhea" id="RHEA:54728"/>
        <dbReference type="Rhea" id="RHEA-COMP:10505"/>
        <dbReference type="Rhea" id="RHEA-COMP:10506"/>
        <dbReference type="ChEBI" id="CHEBI:57288"/>
        <dbReference type="ChEBI" id="CHEBI:57384"/>
        <dbReference type="ChEBI" id="CHEBI:83144"/>
        <dbReference type="ChEBI" id="CHEBI:83145"/>
        <dbReference type="EC" id="2.1.3.15"/>
    </reaction>
</comment>
<comment type="pathway">
    <text evidence="1">Lipid metabolism; malonyl-CoA biosynthesis; malonyl-CoA from acetyl-CoA: step 1/1.</text>
</comment>
<comment type="subunit">
    <text evidence="1">Acetyl-CoA carboxylase is a heterohexamer composed of biotin carboxyl carrier protein (AccB), biotin carboxylase (AccC) and two subunits each of ACCase subunit alpha (AccA) and ACCase subunit beta (AccD).</text>
</comment>
<comment type="subcellular location">
    <subcellularLocation>
        <location evidence="1">Cytoplasm</location>
    </subcellularLocation>
</comment>
<comment type="similarity">
    <text evidence="1">Belongs to the AccA family.</text>
</comment>
<dbReference type="EC" id="2.1.3.15" evidence="1"/>
<dbReference type="EMBL" id="CP000410">
    <property type="protein sequence ID" value="ABJ53936.1"/>
    <property type="molecule type" value="Genomic_DNA"/>
</dbReference>
<dbReference type="RefSeq" id="WP_001017399.1">
    <property type="nucleotide sequence ID" value="NZ_JAMLJR010000009.1"/>
</dbReference>
<dbReference type="SMR" id="Q04M48"/>
<dbReference type="PaxDb" id="373153-SPD_0390"/>
<dbReference type="KEGG" id="spd:SPD_0390"/>
<dbReference type="eggNOG" id="COG0825">
    <property type="taxonomic scope" value="Bacteria"/>
</dbReference>
<dbReference type="HOGENOM" id="CLU_015486_0_2_9"/>
<dbReference type="BioCyc" id="SPNE373153:G1G6V-428-MONOMER"/>
<dbReference type="UniPathway" id="UPA00655">
    <property type="reaction ID" value="UER00711"/>
</dbReference>
<dbReference type="Proteomes" id="UP000001452">
    <property type="component" value="Chromosome"/>
</dbReference>
<dbReference type="GO" id="GO:0009317">
    <property type="term" value="C:acetyl-CoA carboxylase complex"/>
    <property type="evidence" value="ECO:0007669"/>
    <property type="project" value="InterPro"/>
</dbReference>
<dbReference type="GO" id="GO:0003989">
    <property type="term" value="F:acetyl-CoA carboxylase activity"/>
    <property type="evidence" value="ECO:0007669"/>
    <property type="project" value="InterPro"/>
</dbReference>
<dbReference type="GO" id="GO:0005524">
    <property type="term" value="F:ATP binding"/>
    <property type="evidence" value="ECO:0007669"/>
    <property type="project" value="UniProtKB-KW"/>
</dbReference>
<dbReference type="GO" id="GO:0016743">
    <property type="term" value="F:carboxyl- or carbamoyltransferase activity"/>
    <property type="evidence" value="ECO:0007669"/>
    <property type="project" value="UniProtKB-UniRule"/>
</dbReference>
<dbReference type="GO" id="GO:0006633">
    <property type="term" value="P:fatty acid biosynthetic process"/>
    <property type="evidence" value="ECO:0007669"/>
    <property type="project" value="UniProtKB-KW"/>
</dbReference>
<dbReference type="GO" id="GO:2001295">
    <property type="term" value="P:malonyl-CoA biosynthetic process"/>
    <property type="evidence" value="ECO:0007669"/>
    <property type="project" value="UniProtKB-UniRule"/>
</dbReference>
<dbReference type="Gene3D" id="3.90.226.10">
    <property type="entry name" value="2-enoyl-CoA Hydratase, Chain A, domain 1"/>
    <property type="match status" value="1"/>
</dbReference>
<dbReference type="HAMAP" id="MF_00823">
    <property type="entry name" value="AcetylCoA_CT_alpha"/>
    <property type="match status" value="1"/>
</dbReference>
<dbReference type="InterPro" id="IPR001095">
    <property type="entry name" value="Acetyl_CoA_COase_a_su"/>
</dbReference>
<dbReference type="InterPro" id="IPR029045">
    <property type="entry name" value="ClpP/crotonase-like_dom_sf"/>
</dbReference>
<dbReference type="InterPro" id="IPR011763">
    <property type="entry name" value="COA_CT_C"/>
</dbReference>
<dbReference type="NCBIfam" id="TIGR00513">
    <property type="entry name" value="accA"/>
    <property type="match status" value="1"/>
</dbReference>
<dbReference type="NCBIfam" id="NF041504">
    <property type="entry name" value="AccA_sub"/>
    <property type="match status" value="1"/>
</dbReference>
<dbReference type="NCBIfam" id="NF004344">
    <property type="entry name" value="PRK05724.1"/>
    <property type="match status" value="1"/>
</dbReference>
<dbReference type="NCBIfam" id="NF008971">
    <property type="entry name" value="PRK12319.1"/>
    <property type="match status" value="1"/>
</dbReference>
<dbReference type="PANTHER" id="PTHR42853">
    <property type="entry name" value="ACETYL-COENZYME A CARBOXYLASE CARBOXYL TRANSFERASE SUBUNIT ALPHA"/>
    <property type="match status" value="1"/>
</dbReference>
<dbReference type="PANTHER" id="PTHR42853:SF3">
    <property type="entry name" value="ACETYL-COENZYME A CARBOXYLASE CARBOXYL TRANSFERASE SUBUNIT ALPHA, CHLOROPLASTIC"/>
    <property type="match status" value="1"/>
</dbReference>
<dbReference type="Pfam" id="PF03255">
    <property type="entry name" value="ACCA"/>
    <property type="match status" value="1"/>
</dbReference>
<dbReference type="PRINTS" id="PR01069">
    <property type="entry name" value="ACCCTRFRASEA"/>
</dbReference>
<dbReference type="SUPFAM" id="SSF52096">
    <property type="entry name" value="ClpP/crotonase"/>
    <property type="match status" value="1"/>
</dbReference>
<dbReference type="PROSITE" id="PS50989">
    <property type="entry name" value="COA_CT_CTER"/>
    <property type="match status" value="1"/>
</dbReference>
<sequence length="255" mass="28234">MNIAKIVREAREQSRLTTLDFATGIFDEFIQLHGDRSFRDDGAVVGGIGWLGDQAVTVVGIQKGKSLQDNLKRNFGQPHPEGYRKALRLMKQAEKFGRPVVTFINTAGAYPGVGAEERGQGEAIARNLMEMSDLKVPIIAIIIGEGGSGGALALAVADRVWMLENSIYAILSPEGFASILWKDGTRAMEAAELMKITSHELLEMDVVDKVISEVGLSSKELIKSVKKELQTELARLSQKPLEELLEERYQRFRKY</sequence>
<organism>
    <name type="scientific">Streptococcus pneumoniae serotype 2 (strain D39 / NCTC 7466)</name>
    <dbReference type="NCBI Taxonomy" id="373153"/>
    <lineage>
        <taxon>Bacteria</taxon>
        <taxon>Bacillati</taxon>
        <taxon>Bacillota</taxon>
        <taxon>Bacilli</taxon>
        <taxon>Lactobacillales</taxon>
        <taxon>Streptococcaceae</taxon>
        <taxon>Streptococcus</taxon>
    </lineage>
</organism>
<gene>
    <name evidence="1" type="primary">accA</name>
    <name type="ordered locus">SPD_0390</name>
</gene>
<protein>
    <recommendedName>
        <fullName evidence="1">Acetyl-coenzyme A carboxylase carboxyl transferase subunit alpha</fullName>
        <shortName evidence="1">ACCase subunit alpha</shortName>
        <shortName evidence="1">Acetyl-CoA carboxylase carboxyltransferase subunit alpha</shortName>
        <ecNumber evidence="1">2.1.3.15</ecNumber>
    </recommendedName>
</protein>
<evidence type="ECO:0000255" key="1">
    <source>
        <dbReference type="HAMAP-Rule" id="MF_00823"/>
    </source>
</evidence>
<evidence type="ECO:0000255" key="2">
    <source>
        <dbReference type="PROSITE-ProRule" id="PRU01137"/>
    </source>
</evidence>
<feature type="chain" id="PRO_1000062681" description="Acetyl-coenzyme A carboxylase carboxyl transferase subunit alpha">
    <location>
        <begin position="1"/>
        <end position="255"/>
    </location>
</feature>
<feature type="domain" description="CoA carboxyltransferase C-terminal" evidence="2">
    <location>
        <begin position="1"/>
        <end position="235"/>
    </location>
</feature>
<proteinExistence type="inferred from homology"/>